<reference key="1">
    <citation type="journal article" date="2006" name="Genome Res.">
        <title>Massive genome erosion and functional adaptations provide insights into the symbiotic lifestyle of Sodalis glossinidius in the tsetse host.</title>
        <authorList>
            <person name="Toh H."/>
            <person name="Weiss B.L."/>
            <person name="Perkin S.A.H."/>
            <person name="Yamashita A."/>
            <person name="Oshima K."/>
            <person name="Hattori M."/>
            <person name="Aksoy S."/>
        </authorList>
    </citation>
    <scope>NUCLEOTIDE SEQUENCE [LARGE SCALE GENOMIC DNA]</scope>
    <source>
        <strain>morsitans</strain>
    </source>
</reference>
<feature type="chain" id="PRO_0000359069" description="Acetyl-coenzyme A carboxylase carboxyl transferase subunit beta">
    <location>
        <begin position="1"/>
        <end position="306"/>
    </location>
</feature>
<feature type="domain" description="CoA carboxyltransferase N-terminal" evidence="2">
    <location>
        <begin position="25"/>
        <end position="294"/>
    </location>
</feature>
<feature type="zinc finger region" description="C4-type" evidence="1">
    <location>
        <begin position="29"/>
        <end position="51"/>
    </location>
</feature>
<feature type="region of interest" description="Disordered" evidence="3">
    <location>
        <begin position="281"/>
        <end position="306"/>
    </location>
</feature>
<feature type="compositionally biased region" description="Basic and acidic residues" evidence="3">
    <location>
        <begin position="289"/>
        <end position="306"/>
    </location>
</feature>
<feature type="binding site" evidence="1">
    <location>
        <position position="29"/>
    </location>
    <ligand>
        <name>Zn(2+)</name>
        <dbReference type="ChEBI" id="CHEBI:29105"/>
    </ligand>
</feature>
<feature type="binding site" evidence="1">
    <location>
        <position position="32"/>
    </location>
    <ligand>
        <name>Zn(2+)</name>
        <dbReference type="ChEBI" id="CHEBI:29105"/>
    </ligand>
</feature>
<feature type="binding site" evidence="1">
    <location>
        <position position="48"/>
    </location>
    <ligand>
        <name>Zn(2+)</name>
        <dbReference type="ChEBI" id="CHEBI:29105"/>
    </ligand>
</feature>
<feature type="binding site" evidence="1">
    <location>
        <position position="51"/>
    </location>
    <ligand>
        <name>Zn(2+)</name>
        <dbReference type="ChEBI" id="CHEBI:29105"/>
    </ligand>
</feature>
<evidence type="ECO:0000255" key="1">
    <source>
        <dbReference type="HAMAP-Rule" id="MF_01395"/>
    </source>
</evidence>
<evidence type="ECO:0000255" key="2">
    <source>
        <dbReference type="PROSITE-ProRule" id="PRU01136"/>
    </source>
</evidence>
<evidence type="ECO:0000256" key="3">
    <source>
        <dbReference type="SAM" id="MobiDB-lite"/>
    </source>
</evidence>
<accession>Q2NSI3</accession>
<organism>
    <name type="scientific">Sodalis glossinidius (strain morsitans)</name>
    <dbReference type="NCBI Taxonomy" id="343509"/>
    <lineage>
        <taxon>Bacteria</taxon>
        <taxon>Pseudomonadati</taxon>
        <taxon>Pseudomonadota</taxon>
        <taxon>Gammaproteobacteria</taxon>
        <taxon>Enterobacterales</taxon>
        <taxon>Bruguierivoracaceae</taxon>
        <taxon>Sodalis</taxon>
    </lineage>
</organism>
<sequence>MSWIERILNKSTITSARRANIPEGVWTKCDSCGQVLYRAELERNLEVCPKCDHHMRMTARARLHAFLDKGSESELGSELEPKDILKFRDSKKYKDRLAAAQKATDEKDALVVMKGELYGMPVVVASFEFAFIGGSMSSVVGARFVRAVEQALADDCPLVCFSASGGARMQEALMSLMQMAKTSAALARLRERRLPYISVLTDPTMGGVSASLAMLGDLNVAEPKALIGFAGPRVIEQTVREKLPAGFQRSEFLLEKGAIDLIVRRPEMRLRLASLLAKLTNRPQPQDPLPHEPRPDAVPEDHQDEV</sequence>
<proteinExistence type="inferred from homology"/>
<protein>
    <recommendedName>
        <fullName evidence="1">Acetyl-coenzyme A carboxylase carboxyl transferase subunit beta</fullName>
        <shortName evidence="1">ACCase subunit beta</shortName>
        <shortName evidence="1">Acetyl-CoA carboxylase carboxyltransferase subunit beta</shortName>
        <ecNumber evidence="1">2.1.3.15</ecNumber>
    </recommendedName>
</protein>
<dbReference type="EC" id="2.1.3.15" evidence="1"/>
<dbReference type="EMBL" id="AP008232">
    <property type="protein sequence ID" value="BAE74892.1"/>
    <property type="molecule type" value="Genomic_DNA"/>
</dbReference>
<dbReference type="RefSeq" id="WP_011411445.1">
    <property type="nucleotide sequence ID" value="NC_007712.1"/>
</dbReference>
<dbReference type="SMR" id="Q2NSI3"/>
<dbReference type="STRING" id="343509.SG1617"/>
<dbReference type="KEGG" id="sgl:SG1617"/>
<dbReference type="eggNOG" id="COG0777">
    <property type="taxonomic scope" value="Bacteria"/>
</dbReference>
<dbReference type="HOGENOM" id="CLU_015486_1_0_6"/>
<dbReference type="OrthoDB" id="9772975at2"/>
<dbReference type="UniPathway" id="UPA00655">
    <property type="reaction ID" value="UER00711"/>
</dbReference>
<dbReference type="Proteomes" id="UP000001932">
    <property type="component" value="Chromosome"/>
</dbReference>
<dbReference type="GO" id="GO:0009329">
    <property type="term" value="C:acetate CoA-transferase complex"/>
    <property type="evidence" value="ECO:0007669"/>
    <property type="project" value="TreeGrafter"/>
</dbReference>
<dbReference type="GO" id="GO:0003989">
    <property type="term" value="F:acetyl-CoA carboxylase activity"/>
    <property type="evidence" value="ECO:0007669"/>
    <property type="project" value="InterPro"/>
</dbReference>
<dbReference type="GO" id="GO:0005524">
    <property type="term" value="F:ATP binding"/>
    <property type="evidence" value="ECO:0007669"/>
    <property type="project" value="UniProtKB-KW"/>
</dbReference>
<dbReference type="GO" id="GO:0016743">
    <property type="term" value="F:carboxyl- or carbamoyltransferase activity"/>
    <property type="evidence" value="ECO:0007669"/>
    <property type="project" value="UniProtKB-UniRule"/>
</dbReference>
<dbReference type="GO" id="GO:0008270">
    <property type="term" value="F:zinc ion binding"/>
    <property type="evidence" value="ECO:0007669"/>
    <property type="project" value="UniProtKB-UniRule"/>
</dbReference>
<dbReference type="GO" id="GO:0006633">
    <property type="term" value="P:fatty acid biosynthetic process"/>
    <property type="evidence" value="ECO:0007669"/>
    <property type="project" value="UniProtKB-KW"/>
</dbReference>
<dbReference type="GO" id="GO:2001295">
    <property type="term" value="P:malonyl-CoA biosynthetic process"/>
    <property type="evidence" value="ECO:0007669"/>
    <property type="project" value="UniProtKB-UniRule"/>
</dbReference>
<dbReference type="FunFam" id="3.90.226.10:FF:000013">
    <property type="entry name" value="Acetyl-coenzyme A carboxylase carboxyl transferase subunit beta"/>
    <property type="match status" value="1"/>
</dbReference>
<dbReference type="Gene3D" id="3.90.226.10">
    <property type="entry name" value="2-enoyl-CoA Hydratase, Chain A, domain 1"/>
    <property type="match status" value="1"/>
</dbReference>
<dbReference type="HAMAP" id="MF_01395">
    <property type="entry name" value="AcetylCoA_CT_beta"/>
    <property type="match status" value="1"/>
</dbReference>
<dbReference type="InterPro" id="IPR034733">
    <property type="entry name" value="AcCoA_carboxyl_beta"/>
</dbReference>
<dbReference type="InterPro" id="IPR000438">
    <property type="entry name" value="Acetyl_CoA_COase_Trfase_b_su"/>
</dbReference>
<dbReference type="InterPro" id="IPR029045">
    <property type="entry name" value="ClpP/crotonase-like_dom_sf"/>
</dbReference>
<dbReference type="InterPro" id="IPR011762">
    <property type="entry name" value="COA_CT_N"/>
</dbReference>
<dbReference type="InterPro" id="IPR041010">
    <property type="entry name" value="Znf-ACC"/>
</dbReference>
<dbReference type="NCBIfam" id="TIGR00515">
    <property type="entry name" value="accD"/>
    <property type="match status" value="1"/>
</dbReference>
<dbReference type="PANTHER" id="PTHR42995">
    <property type="entry name" value="ACETYL-COENZYME A CARBOXYLASE CARBOXYL TRANSFERASE SUBUNIT BETA, CHLOROPLASTIC"/>
    <property type="match status" value="1"/>
</dbReference>
<dbReference type="PANTHER" id="PTHR42995:SF5">
    <property type="entry name" value="ACETYL-COENZYME A CARBOXYLASE CARBOXYL TRANSFERASE SUBUNIT BETA, CHLOROPLASTIC"/>
    <property type="match status" value="1"/>
</dbReference>
<dbReference type="Pfam" id="PF01039">
    <property type="entry name" value="Carboxyl_trans"/>
    <property type="match status" value="1"/>
</dbReference>
<dbReference type="Pfam" id="PF17848">
    <property type="entry name" value="Zn_ribbon_ACC"/>
    <property type="match status" value="1"/>
</dbReference>
<dbReference type="PRINTS" id="PR01070">
    <property type="entry name" value="ACCCTRFRASEB"/>
</dbReference>
<dbReference type="SUPFAM" id="SSF52096">
    <property type="entry name" value="ClpP/crotonase"/>
    <property type="match status" value="1"/>
</dbReference>
<dbReference type="PROSITE" id="PS50980">
    <property type="entry name" value="COA_CT_NTER"/>
    <property type="match status" value="1"/>
</dbReference>
<keyword id="KW-0067">ATP-binding</keyword>
<keyword id="KW-0963">Cytoplasm</keyword>
<keyword id="KW-0275">Fatty acid biosynthesis</keyword>
<keyword id="KW-0276">Fatty acid metabolism</keyword>
<keyword id="KW-0444">Lipid biosynthesis</keyword>
<keyword id="KW-0443">Lipid metabolism</keyword>
<keyword id="KW-0479">Metal-binding</keyword>
<keyword id="KW-0547">Nucleotide-binding</keyword>
<keyword id="KW-0808">Transferase</keyword>
<keyword id="KW-0862">Zinc</keyword>
<keyword id="KW-0863">Zinc-finger</keyword>
<comment type="function">
    <text evidence="1">Component of the acetyl coenzyme A carboxylase (ACC) complex. Biotin carboxylase (BC) catalyzes the carboxylation of biotin on its carrier protein (BCCP) and then the CO(2) group is transferred by the transcarboxylase to acetyl-CoA to form malonyl-CoA.</text>
</comment>
<comment type="catalytic activity">
    <reaction evidence="1">
        <text>N(6)-carboxybiotinyl-L-lysyl-[protein] + acetyl-CoA = N(6)-biotinyl-L-lysyl-[protein] + malonyl-CoA</text>
        <dbReference type="Rhea" id="RHEA:54728"/>
        <dbReference type="Rhea" id="RHEA-COMP:10505"/>
        <dbReference type="Rhea" id="RHEA-COMP:10506"/>
        <dbReference type="ChEBI" id="CHEBI:57288"/>
        <dbReference type="ChEBI" id="CHEBI:57384"/>
        <dbReference type="ChEBI" id="CHEBI:83144"/>
        <dbReference type="ChEBI" id="CHEBI:83145"/>
        <dbReference type="EC" id="2.1.3.15"/>
    </reaction>
</comment>
<comment type="cofactor">
    <cofactor evidence="1">
        <name>Zn(2+)</name>
        <dbReference type="ChEBI" id="CHEBI:29105"/>
    </cofactor>
    <text evidence="1">Binds 1 zinc ion per subunit.</text>
</comment>
<comment type="pathway">
    <text evidence="1">Lipid metabolism; malonyl-CoA biosynthesis; malonyl-CoA from acetyl-CoA: step 1/1.</text>
</comment>
<comment type="subunit">
    <text evidence="1">Acetyl-CoA carboxylase is a heterohexamer composed of biotin carboxyl carrier protein (AccB), biotin carboxylase (AccC) and two subunits each of ACCase subunit alpha (AccA) and ACCase subunit beta (AccD).</text>
</comment>
<comment type="subcellular location">
    <subcellularLocation>
        <location evidence="1">Cytoplasm</location>
    </subcellularLocation>
</comment>
<comment type="similarity">
    <text evidence="1">Belongs to the AccD/PCCB family.</text>
</comment>
<name>ACCD_SODGM</name>
<gene>
    <name evidence="1" type="primary">accD</name>
    <name type="ordered locus">SG1617</name>
</gene>